<proteinExistence type="inferred from homology"/>
<keyword id="KW-1185">Reference proteome</keyword>
<keyword id="KW-0687">Ribonucleoprotein</keyword>
<keyword id="KW-0689">Ribosomal protein</keyword>
<keyword id="KW-0694">RNA-binding</keyword>
<keyword id="KW-0699">rRNA-binding</keyword>
<feature type="chain" id="PRO_0000236620" description="Large ribosomal subunit protein bL9">
    <location>
        <begin position="1"/>
        <end position="150"/>
    </location>
</feature>
<organism>
    <name type="scientific">Wolinella succinogenes (strain ATCC 29543 / DSM 1740 / CCUG 13145 / JCM 31913 / LMG 7466 / NCTC 11488 / FDC 602W)</name>
    <name type="common">Vibrio succinogenes</name>
    <dbReference type="NCBI Taxonomy" id="273121"/>
    <lineage>
        <taxon>Bacteria</taxon>
        <taxon>Pseudomonadati</taxon>
        <taxon>Campylobacterota</taxon>
        <taxon>Epsilonproteobacteria</taxon>
        <taxon>Campylobacterales</taxon>
        <taxon>Helicobacteraceae</taxon>
        <taxon>Wolinella</taxon>
    </lineage>
</organism>
<comment type="function">
    <text evidence="1">Binds to the 23S rRNA.</text>
</comment>
<comment type="similarity">
    <text evidence="1">Belongs to the bacterial ribosomal protein bL9 family.</text>
</comment>
<accession>Q7M8Z5</accession>
<evidence type="ECO:0000255" key="1">
    <source>
        <dbReference type="HAMAP-Rule" id="MF_00503"/>
    </source>
</evidence>
<evidence type="ECO:0000305" key="2"/>
<sequence>MKVLLTKEVKGLGKAGEIHEVKDGYGRNFLVGKGMAEIATNEVINRWKAEQKRRAEKEAQELERLKNVAKELASVTLKIVQKVGANGSLYGAITKEDLSAALMAQKGIEVDKKSFELKTPIKSTGIYEIEVKLGHGIHAELKIDVEGSNV</sequence>
<gene>
    <name evidence="1" type="primary">rplI</name>
    <name type="ordered locus">WS1295</name>
</gene>
<reference key="1">
    <citation type="journal article" date="2003" name="Proc. Natl. Acad. Sci. U.S.A.">
        <title>Complete genome sequence and analysis of Wolinella succinogenes.</title>
        <authorList>
            <person name="Baar C."/>
            <person name="Eppinger M."/>
            <person name="Raddatz G."/>
            <person name="Simon J."/>
            <person name="Lanz C."/>
            <person name="Klimmek O."/>
            <person name="Nandakumar R."/>
            <person name="Gross R."/>
            <person name="Rosinus A."/>
            <person name="Keller H."/>
            <person name="Jagtap P."/>
            <person name="Linke B."/>
            <person name="Meyer F."/>
            <person name="Lederer H."/>
            <person name="Schuster S.C."/>
        </authorList>
    </citation>
    <scope>NUCLEOTIDE SEQUENCE [LARGE SCALE GENOMIC DNA]</scope>
    <source>
        <strain>ATCC 29543 / DSM 1740 / CCUG 13145 / JCM 31913 / LMG 7466 / NCTC 11488 / FDC 602W</strain>
    </source>
</reference>
<dbReference type="EMBL" id="BX571660">
    <property type="protein sequence ID" value="CAE10373.1"/>
    <property type="molecule type" value="Genomic_DNA"/>
</dbReference>
<dbReference type="RefSeq" id="WP_011139159.1">
    <property type="nucleotide sequence ID" value="NC_005090.1"/>
</dbReference>
<dbReference type="SMR" id="Q7M8Z5"/>
<dbReference type="STRING" id="273121.WS1295"/>
<dbReference type="KEGG" id="wsu:WS1295"/>
<dbReference type="eggNOG" id="COG0359">
    <property type="taxonomic scope" value="Bacteria"/>
</dbReference>
<dbReference type="HOGENOM" id="CLU_078938_3_0_7"/>
<dbReference type="Proteomes" id="UP000000422">
    <property type="component" value="Chromosome"/>
</dbReference>
<dbReference type="GO" id="GO:1990904">
    <property type="term" value="C:ribonucleoprotein complex"/>
    <property type="evidence" value="ECO:0007669"/>
    <property type="project" value="UniProtKB-KW"/>
</dbReference>
<dbReference type="GO" id="GO:0005840">
    <property type="term" value="C:ribosome"/>
    <property type="evidence" value="ECO:0007669"/>
    <property type="project" value="UniProtKB-KW"/>
</dbReference>
<dbReference type="GO" id="GO:0019843">
    <property type="term" value="F:rRNA binding"/>
    <property type="evidence" value="ECO:0007669"/>
    <property type="project" value="UniProtKB-UniRule"/>
</dbReference>
<dbReference type="GO" id="GO:0003735">
    <property type="term" value="F:structural constituent of ribosome"/>
    <property type="evidence" value="ECO:0007669"/>
    <property type="project" value="InterPro"/>
</dbReference>
<dbReference type="GO" id="GO:0006412">
    <property type="term" value="P:translation"/>
    <property type="evidence" value="ECO:0007669"/>
    <property type="project" value="UniProtKB-UniRule"/>
</dbReference>
<dbReference type="Gene3D" id="3.10.430.100">
    <property type="entry name" value="Ribosomal protein L9, C-terminal domain"/>
    <property type="match status" value="1"/>
</dbReference>
<dbReference type="Gene3D" id="3.40.5.10">
    <property type="entry name" value="Ribosomal protein L9, N-terminal domain"/>
    <property type="match status" value="1"/>
</dbReference>
<dbReference type="HAMAP" id="MF_00503">
    <property type="entry name" value="Ribosomal_bL9"/>
    <property type="match status" value="1"/>
</dbReference>
<dbReference type="InterPro" id="IPR000244">
    <property type="entry name" value="Ribosomal_bL9"/>
</dbReference>
<dbReference type="InterPro" id="IPR009027">
    <property type="entry name" value="Ribosomal_bL9/RNase_H1_N"/>
</dbReference>
<dbReference type="InterPro" id="IPR020594">
    <property type="entry name" value="Ribosomal_bL9_bac/chp"/>
</dbReference>
<dbReference type="InterPro" id="IPR020069">
    <property type="entry name" value="Ribosomal_bL9_C"/>
</dbReference>
<dbReference type="InterPro" id="IPR036791">
    <property type="entry name" value="Ribosomal_bL9_C_sf"/>
</dbReference>
<dbReference type="InterPro" id="IPR020070">
    <property type="entry name" value="Ribosomal_bL9_N"/>
</dbReference>
<dbReference type="InterPro" id="IPR036935">
    <property type="entry name" value="Ribosomal_bL9_N_sf"/>
</dbReference>
<dbReference type="NCBIfam" id="TIGR00158">
    <property type="entry name" value="L9"/>
    <property type="match status" value="1"/>
</dbReference>
<dbReference type="PANTHER" id="PTHR21368">
    <property type="entry name" value="50S RIBOSOMAL PROTEIN L9"/>
    <property type="match status" value="1"/>
</dbReference>
<dbReference type="Pfam" id="PF03948">
    <property type="entry name" value="Ribosomal_L9_C"/>
    <property type="match status" value="1"/>
</dbReference>
<dbReference type="Pfam" id="PF01281">
    <property type="entry name" value="Ribosomal_L9_N"/>
    <property type="match status" value="1"/>
</dbReference>
<dbReference type="SUPFAM" id="SSF55658">
    <property type="entry name" value="L9 N-domain-like"/>
    <property type="match status" value="1"/>
</dbReference>
<dbReference type="SUPFAM" id="SSF55653">
    <property type="entry name" value="Ribosomal protein L9 C-domain"/>
    <property type="match status" value="1"/>
</dbReference>
<dbReference type="PROSITE" id="PS00651">
    <property type="entry name" value="RIBOSOMAL_L9"/>
    <property type="match status" value="1"/>
</dbReference>
<name>RL9_WOLSU</name>
<protein>
    <recommendedName>
        <fullName evidence="1">Large ribosomal subunit protein bL9</fullName>
    </recommendedName>
    <alternativeName>
        <fullName evidence="2">50S ribosomal protein L9</fullName>
    </alternativeName>
</protein>